<keyword id="KW-0007">Acetylation</keyword>
<keyword id="KW-0067">ATP-binding</keyword>
<keyword id="KW-0436">Ligase</keyword>
<keyword id="KW-0460">Magnesium</keyword>
<keyword id="KW-0479">Metal-binding</keyword>
<keyword id="KW-0547">Nucleotide-binding</keyword>
<proteinExistence type="inferred from homology"/>
<evidence type="ECO:0000255" key="1">
    <source>
        <dbReference type="HAMAP-Rule" id="MF_01123"/>
    </source>
</evidence>
<dbReference type="EC" id="6.2.1.1" evidence="1"/>
<dbReference type="EMBL" id="CP000525">
    <property type="protein sequence ID" value="ABM48002.1"/>
    <property type="molecule type" value="Genomic_DNA"/>
</dbReference>
<dbReference type="SMR" id="A1UWN5"/>
<dbReference type="KEGG" id="bmv:BMASAVP1_0788"/>
<dbReference type="HOGENOM" id="CLU_000022_3_6_4"/>
<dbReference type="GO" id="GO:0005829">
    <property type="term" value="C:cytosol"/>
    <property type="evidence" value="ECO:0007669"/>
    <property type="project" value="TreeGrafter"/>
</dbReference>
<dbReference type="GO" id="GO:0003987">
    <property type="term" value="F:acetate-CoA ligase activity"/>
    <property type="evidence" value="ECO:0007669"/>
    <property type="project" value="UniProtKB-UniRule"/>
</dbReference>
<dbReference type="GO" id="GO:0016208">
    <property type="term" value="F:AMP binding"/>
    <property type="evidence" value="ECO:0007669"/>
    <property type="project" value="InterPro"/>
</dbReference>
<dbReference type="GO" id="GO:0005524">
    <property type="term" value="F:ATP binding"/>
    <property type="evidence" value="ECO:0007669"/>
    <property type="project" value="UniProtKB-KW"/>
</dbReference>
<dbReference type="GO" id="GO:0046872">
    <property type="term" value="F:metal ion binding"/>
    <property type="evidence" value="ECO:0007669"/>
    <property type="project" value="UniProtKB-KW"/>
</dbReference>
<dbReference type="GO" id="GO:0019427">
    <property type="term" value="P:acetyl-CoA biosynthetic process from acetate"/>
    <property type="evidence" value="ECO:0007669"/>
    <property type="project" value="InterPro"/>
</dbReference>
<dbReference type="CDD" id="cd05966">
    <property type="entry name" value="ACS"/>
    <property type="match status" value="1"/>
</dbReference>
<dbReference type="FunFam" id="3.40.50.12780:FF:000001">
    <property type="entry name" value="Acetyl-coenzyme A synthetase"/>
    <property type="match status" value="1"/>
</dbReference>
<dbReference type="Gene3D" id="3.30.300.30">
    <property type="match status" value="1"/>
</dbReference>
<dbReference type="Gene3D" id="3.40.50.12780">
    <property type="entry name" value="N-terminal domain of ligase-like"/>
    <property type="match status" value="1"/>
</dbReference>
<dbReference type="HAMAP" id="MF_01123">
    <property type="entry name" value="Ac_CoA_synth"/>
    <property type="match status" value="1"/>
</dbReference>
<dbReference type="InterPro" id="IPR011904">
    <property type="entry name" value="Ac_CoA_lig"/>
</dbReference>
<dbReference type="InterPro" id="IPR032387">
    <property type="entry name" value="ACAS_N"/>
</dbReference>
<dbReference type="InterPro" id="IPR025110">
    <property type="entry name" value="AMP-bd_C"/>
</dbReference>
<dbReference type="InterPro" id="IPR045851">
    <property type="entry name" value="AMP-bd_C_sf"/>
</dbReference>
<dbReference type="InterPro" id="IPR020845">
    <property type="entry name" value="AMP-binding_CS"/>
</dbReference>
<dbReference type="InterPro" id="IPR000873">
    <property type="entry name" value="AMP-dep_synth/lig_dom"/>
</dbReference>
<dbReference type="InterPro" id="IPR042099">
    <property type="entry name" value="ANL_N_sf"/>
</dbReference>
<dbReference type="NCBIfam" id="TIGR02188">
    <property type="entry name" value="Ac_CoA_lig_AcsA"/>
    <property type="match status" value="1"/>
</dbReference>
<dbReference type="NCBIfam" id="NF001208">
    <property type="entry name" value="PRK00174.1"/>
    <property type="match status" value="1"/>
</dbReference>
<dbReference type="PANTHER" id="PTHR24095">
    <property type="entry name" value="ACETYL-COENZYME A SYNTHETASE"/>
    <property type="match status" value="1"/>
</dbReference>
<dbReference type="PANTHER" id="PTHR24095:SF14">
    <property type="entry name" value="ACETYL-COENZYME A SYNTHETASE 1"/>
    <property type="match status" value="1"/>
</dbReference>
<dbReference type="Pfam" id="PF16177">
    <property type="entry name" value="ACAS_N"/>
    <property type="match status" value="1"/>
</dbReference>
<dbReference type="Pfam" id="PF00501">
    <property type="entry name" value="AMP-binding"/>
    <property type="match status" value="1"/>
</dbReference>
<dbReference type="Pfam" id="PF13193">
    <property type="entry name" value="AMP-binding_C"/>
    <property type="match status" value="1"/>
</dbReference>
<dbReference type="SUPFAM" id="SSF56801">
    <property type="entry name" value="Acetyl-CoA synthetase-like"/>
    <property type="match status" value="1"/>
</dbReference>
<dbReference type="PROSITE" id="PS00455">
    <property type="entry name" value="AMP_BINDING"/>
    <property type="match status" value="1"/>
</dbReference>
<organism>
    <name type="scientific">Burkholderia mallei (strain SAVP1)</name>
    <dbReference type="NCBI Taxonomy" id="320388"/>
    <lineage>
        <taxon>Bacteria</taxon>
        <taxon>Pseudomonadati</taxon>
        <taxon>Pseudomonadota</taxon>
        <taxon>Betaproteobacteria</taxon>
        <taxon>Burkholderiales</taxon>
        <taxon>Burkholderiaceae</taxon>
        <taxon>Burkholderia</taxon>
        <taxon>pseudomallei group</taxon>
    </lineage>
</organism>
<accession>A1UWN5</accession>
<protein>
    <recommendedName>
        <fullName evidence="1">Acetyl-coenzyme A synthetase</fullName>
        <shortName evidence="1">AcCoA synthetase</shortName>
        <shortName evidence="1">Acs</shortName>
        <ecNumber evidence="1">6.2.1.1</ecNumber>
    </recommendedName>
    <alternativeName>
        <fullName evidence="1">Acetate--CoA ligase</fullName>
    </alternativeName>
    <alternativeName>
        <fullName evidence="1">Acyl-activating enzyme</fullName>
    </alternativeName>
</protein>
<gene>
    <name evidence="1" type="primary">acsA</name>
    <name type="ordered locus">BMASAVP1_0788</name>
</gene>
<sequence>MSAIESVLHERRQFAPPAAVEKAAAISGMAAYRALAEEAERDYEGFWARLARETLEWRKPFGKVLDETNAPFYKWFEDGELNASYNCLDRHVAAGLGERVAVIFEADDGTVTRVTYADLLARVSRFANALKKRGVGRGDRVVIYIPMSVEGIVAMQACARIGATHSVVFGGFSSKSLHERIVDVGATALVTADEQMRGGKTLPLKSIADEALAMGGCDAVKTVVVYRRTGGNVDWHAGRDVWMHEMVANESDACEPEWVGAEHPLFILYTSGSTGKPKGVQHSTAGYLLWVAQTMKWTFDWKPDDVFWCTADIGWVTGHSYITYGPLAVGATQVVFEGVPTYPNAGRFWKMIGDHKVTVFYTAPTAIRSLIKAAEADDRVHPRSYDLSSLRIIGTVGEPINPEAWIWYHKNVGQARCPIVDTWWQTETGGHMITPLPGATPTVPGSCTLPLPGIMAAVVDETGQDVPNGQGGILVVKRPWPAMARTIWGDPERFKKSYFPEELGGRLYLAGDGTVRDKETGYFTIMGRIDDVLNVSGHRLGTMEIESALVSHELVAEAAVVGRPDDTTGEAVVAFVVLKRSRPEGEEAAALAKTLRDWVGKEIGPIAKPKDIRFGDNLPKTRSGKIMRRLLRSLAKGEAITQDTSTLENPAILEQLAEVR</sequence>
<feature type="chain" id="PRO_1000065280" description="Acetyl-coenzyme A synthetase">
    <location>
        <begin position="1"/>
        <end position="660"/>
    </location>
</feature>
<feature type="binding site" evidence="1">
    <location>
        <begin position="197"/>
        <end position="200"/>
    </location>
    <ligand>
        <name>CoA</name>
        <dbReference type="ChEBI" id="CHEBI:57287"/>
    </ligand>
</feature>
<feature type="binding site" evidence="1">
    <location>
        <position position="317"/>
    </location>
    <ligand>
        <name>CoA</name>
        <dbReference type="ChEBI" id="CHEBI:57287"/>
    </ligand>
</feature>
<feature type="binding site" evidence="1">
    <location>
        <begin position="397"/>
        <end position="399"/>
    </location>
    <ligand>
        <name>ATP</name>
        <dbReference type="ChEBI" id="CHEBI:30616"/>
    </ligand>
</feature>
<feature type="binding site" evidence="1">
    <location>
        <begin position="421"/>
        <end position="426"/>
    </location>
    <ligand>
        <name>ATP</name>
        <dbReference type="ChEBI" id="CHEBI:30616"/>
    </ligand>
</feature>
<feature type="binding site" evidence="1">
    <location>
        <position position="512"/>
    </location>
    <ligand>
        <name>ATP</name>
        <dbReference type="ChEBI" id="CHEBI:30616"/>
    </ligand>
</feature>
<feature type="binding site" evidence="1">
    <location>
        <position position="528"/>
    </location>
    <ligand>
        <name>ATP</name>
        <dbReference type="ChEBI" id="CHEBI:30616"/>
    </ligand>
</feature>
<feature type="binding site" evidence="1">
    <location>
        <position position="536"/>
    </location>
    <ligand>
        <name>CoA</name>
        <dbReference type="ChEBI" id="CHEBI:57287"/>
    </ligand>
</feature>
<feature type="binding site" evidence="1">
    <location>
        <position position="539"/>
    </location>
    <ligand>
        <name>ATP</name>
        <dbReference type="ChEBI" id="CHEBI:30616"/>
    </ligand>
</feature>
<feature type="binding site" evidence="1">
    <location>
        <position position="550"/>
    </location>
    <ligand>
        <name>Mg(2+)</name>
        <dbReference type="ChEBI" id="CHEBI:18420"/>
    </ligand>
</feature>
<feature type="binding site" evidence="1">
    <location>
        <position position="552"/>
    </location>
    <ligand>
        <name>Mg(2+)</name>
        <dbReference type="ChEBI" id="CHEBI:18420"/>
    </ligand>
</feature>
<feature type="binding site" evidence="1">
    <location>
        <position position="555"/>
    </location>
    <ligand>
        <name>Mg(2+)</name>
        <dbReference type="ChEBI" id="CHEBI:18420"/>
    </ligand>
</feature>
<feature type="modified residue" description="N6-acetyllysine" evidence="1">
    <location>
        <position position="625"/>
    </location>
</feature>
<name>ACSA_BURMS</name>
<reference key="1">
    <citation type="journal article" date="2010" name="Genome Biol. Evol.">
        <title>Continuing evolution of Burkholderia mallei through genome reduction and large-scale rearrangements.</title>
        <authorList>
            <person name="Losada L."/>
            <person name="Ronning C.M."/>
            <person name="DeShazer D."/>
            <person name="Woods D."/>
            <person name="Fedorova N."/>
            <person name="Kim H.S."/>
            <person name="Shabalina S.A."/>
            <person name="Pearson T.R."/>
            <person name="Brinkac L."/>
            <person name="Tan P."/>
            <person name="Nandi T."/>
            <person name="Crabtree J."/>
            <person name="Badger J."/>
            <person name="Beckstrom-Sternberg S."/>
            <person name="Saqib M."/>
            <person name="Schutzer S.E."/>
            <person name="Keim P."/>
            <person name="Nierman W.C."/>
        </authorList>
    </citation>
    <scope>NUCLEOTIDE SEQUENCE [LARGE SCALE GENOMIC DNA]</scope>
    <source>
        <strain>SAVP1</strain>
    </source>
</reference>
<comment type="function">
    <text evidence="1">Catalyzes the conversion of acetate into acetyl-CoA (AcCoA), an essential intermediate at the junction of anabolic and catabolic pathways. AcsA undergoes a two-step reaction. In the first half reaction, AcsA combines acetate with ATP to form acetyl-adenylate (AcAMP) intermediate. In the second half reaction, it can then transfer the acetyl group from AcAMP to the sulfhydryl group of CoA, forming the product AcCoA.</text>
</comment>
<comment type="catalytic activity">
    <reaction evidence="1">
        <text>acetate + ATP + CoA = acetyl-CoA + AMP + diphosphate</text>
        <dbReference type="Rhea" id="RHEA:23176"/>
        <dbReference type="ChEBI" id="CHEBI:30089"/>
        <dbReference type="ChEBI" id="CHEBI:30616"/>
        <dbReference type="ChEBI" id="CHEBI:33019"/>
        <dbReference type="ChEBI" id="CHEBI:57287"/>
        <dbReference type="ChEBI" id="CHEBI:57288"/>
        <dbReference type="ChEBI" id="CHEBI:456215"/>
        <dbReference type="EC" id="6.2.1.1"/>
    </reaction>
</comment>
<comment type="cofactor">
    <cofactor evidence="1">
        <name>Mg(2+)</name>
        <dbReference type="ChEBI" id="CHEBI:18420"/>
    </cofactor>
</comment>
<comment type="PTM">
    <text evidence="1">Acetylated. Deacetylation by the SIR2-homolog deacetylase activates the enzyme.</text>
</comment>
<comment type="similarity">
    <text evidence="1">Belongs to the ATP-dependent AMP-binding enzyme family.</text>
</comment>